<name>G3P_CHLMU</name>
<comment type="function">
    <text evidence="1">Catalyzes the oxidative phosphorylation of glyceraldehyde 3-phosphate (G3P) to 1,3-bisphosphoglycerate (BPG) using the cofactor NAD. The first reaction step involves the formation of a hemiacetal intermediate between G3P and a cysteine residue, and this hemiacetal intermediate is then oxidized to a thioester, with concomitant reduction of NAD to NADH. The reduced NADH is then exchanged with the second NAD, and the thioester is attacked by a nucleophilic inorganic phosphate to produce BPG.</text>
</comment>
<comment type="catalytic activity">
    <reaction evidence="2">
        <text>D-glyceraldehyde 3-phosphate + phosphate + NAD(+) = (2R)-3-phospho-glyceroyl phosphate + NADH + H(+)</text>
        <dbReference type="Rhea" id="RHEA:10300"/>
        <dbReference type="ChEBI" id="CHEBI:15378"/>
        <dbReference type="ChEBI" id="CHEBI:43474"/>
        <dbReference type="ChEBI" id="CHEBI:57540"/>
        <dbReference type="ChEBI" id="CHEBI:57604"/>
        <dbReference type="ChEBI" id="CHEBI:57945"/>
        <dbReference type="ChEBI" id="CHEBI:59776"/>
        <dbReference type="EC" id="1.2.1.12"/>
    </reaction>
</comment>
<comment type="pathway">
    <text evidence="3">Carbohydrate degradation; glycolysis; pyruvate from D-glyceraldehyde 3-phosphate: step 1/5.</text>
</comment>
<comment type="subunit">
    <text evidence="1">Homotetramer.</text>
</comment>
<comment type="subcellular location">
    <subcellularLocation>
        <location evidence="3">Cytoplasm</location>
    </subcellularLocation>
</comment>
<comment type="similarity">
    <text evidence="3">Belongs to the glyceraldehyde-3-phosphate dehydrogenase family.</text>
</comment>
<sequence length="335" mass="36241">MRIVINGFGRIGRLVLRQILKRNAPIEVVAINDLVSGDLLTYLFKYDSTHGSFASQATFSDGCLVVGERKIRFLAEKDVQKLPWKDLDVDVVVESTGLFVNKDDAAKHLDSGAKRVLITAPAKGDVPTFVMGVNHQKFDPANDVIISNASCTTNCLAPLAKVLLDNFGIEEGLMTTVHAATATQSVVDGPSRKDWRGGRGAFQNIIPASTGAAKAVGLCLPELKGKLTGMAFRVPVADVSVVDLTVKLSSATTYEAVCEAVKHAASTSMRNIMHYTEEAVVSSDFIGCEYSSVFDAQAGVALNDRFFKLIAWYDNEIGYATRIVDLLEYIQGNSK</sequence>
<protein>
    <recommendedName>
        <fullName evidence="1">Glyceraldehyde-3-phosphate dehydrogenase</fullName>
        <shortName evidence="1">GAPDH</shortName>
        <ecNumber evidence="2">1.2.1.12</ecNumber>
    </recommendedName>
    <alternativeName>
        <fullName evidence="1">NAD-dependent glyceraldehyde-3-phosphate dehydrogenase</fullName>
    </alternativeName>
</protein>
<organism>
    <name type="scientific">Chlamydia muridarum (strain MoPn / Nigg)</name>
    <dbReference type="NCBI Taxonomy" id="243161"/>
    <lineage>
        <taxon>Bacteria</taxon>
        <taxon>Pseudomonadati</taxon>
        <taxon>Chlamydiota</taxon>
        <taxon>Chlamydiia</taxon>
        <taxon>Chlamydiales</taxon>
        <taxon>Chlamydiaceae</taxon>
        <taxon>Chlamydia/Chlamydophila group</taxon>
        <taxon>Chlamydia</taxon>
    </lineage>
</organism>
<gene>
    <name type="primary">gap</name>
    <name type="ordered locus">TC_0792</name>
</gene>
<feature type="chain" id="PRO_0000145641" description="Glyceraldehyde-3-phosphate dehydrogenase">
    <location>
        <begin position="1"/>
        <end position="335"/>
    </location>
</feature>
<feature type="active site" description="Nucleophile" evidence="1">
    <location>
        <position position="151"/>
    </location>
</feature>
<feature type="binding site" evidence="1">
    <location>
        <begin position="10"/>
        <end position="11"/>
    </location>
    <ligand>
        <name>NAD(+)</name>
        <dbReference type="ChEBI" id="CHEBI:57540"/>
    </ligand>
</feature>
<feature type="binding site" evidence="1">
    <location>
        <position position="33"/>
    </location>
    <ligand>
        <name>NAD(+)</name>
        <dbReference type="ChEBI" id="CHEBI:57540"/>
    </ligand>
</feature>
<feature type="binding site" evidence="1">
    <location>
        <position position="77"/>
    </location>
    <ligand>
        <name>NAD(+)</name>
        <dbReference type="ChEBI" id="CHEBI:57540"/>
    </ligand>
</feature>
<feature type="binding site" evidence="1">
    <location>
        <position position="119"/>
    </location>
    <ligand>
        <name>NAD(+)</name>
        <dbReference type="ChEBI" id="CHEBI:57540"/>
    </ligand>
</feature>
<feature type="binding site" evidence="1">
    <location>
        <begin position="150"/>
        <end position="152"/>
    </location>
    <ligand>
        <name>D-glyceraldehyde 3-phosphate</name>
        <dbReference type="ChEBI" id="CHEBI:59776"/>
    </ligand>
</feature>
<feature type="binding site" evidence="1">
    <location>
        <position position="181"/>
    </location>
    <ligand>
        <name>D-glyceraldehyde 3-phosphate</name>
        <dbReference type="ChEBI" id="CHEBI:59776"/>
    </ligand>
</feature>
<feature type="binding site" evidence="1">
    <location>
        <begin position="210"/>
        <end position="211"/>
    </location>
    <ligand>
        <name>D-glyceraldehyde 3-phosphate</name>
        <dbReference type="ChEBI" id="CHEBI:59776"/>
    </ligand>
</feature>
<feature type="binding site" evidence="1">
    <location>
        <position position="233"/>
    </location>
    <ligand>
        <name>D-glyceraldehyde 3-phosphate</name>
        <dbReference type="ChEBI" id="CHEBI:59776"/>
    </ligand>
</feature>
<feature type="binding site" evidence="1">
    <location>
        <position position="315"/>
    </location>
    <ligand>
        <name>NAD(+)</name>
        <dbReference type="ChEBI" id="CHEBI:57540"/>
    </ligand>
</feature>
<feature type="site" description="Activates thiol group during catalysis" evidence="1">
    <location>
        <position position="178"/>
    </location>
</feature>
<reference key="1">
    <citation type="journal article" date="2000" name="Nucleic Acids Res.">
        <title>Genome sequences of Chlamydia trachomatis MoPn and Chlamydia pneumoniae AR39.</title>
        <authorList>
            <person name="Read T.D."/>
            <person name="Brunham R.C."/>
            <person name="Shen C."/>
            <person name="Gill S.R."/>
            <person name="Heidelberg J.F."/>
            <person name="White O."/>
            <person name="Hickey E.K."/>
            <person name="Peterson J.D."/>
            <person name="Utterback T.R."/>
            <person name="Berry K.J."/>
            <person name="Bass S."/>
            <person name="Linher K.D."/>
            <person name="Weidman J.F."/>
            <person name="Khouri H.M."/>
            <person name="Craven B."/>
            <person name="Bowman C."/>
            <person name="Dodson R.J."/>
            <person name="Gwinn M.L."/>
            <person name="Nelson W.C."/>
            <person name="DeBoy R.T."/>
            <person name="Kolonay J.F."/>
            <person name="McClarty G."/>
            <person name="Salzberg S.L."/>
            <person name="Eisen J.A."/>
            <person name="Fraser C.M."/>
        </authorList>
    </citation>
    <scope>NUCLEOTIDE SEQUENCE [LARGE SCALE GENOMIC DNA]</scope>
    <source>
        <strain>MoPn / Nigg</strain>
    </source>
</reference>
<keyword id="KW-0963">Cytoplasm</keyword>
<keyword id="KW-0324">Glycolysis</keyword>
<keyword id="KW-0520">NAD</keyword>
<keyword id="KW-0547">Nucleotide-binding</keyword>
<keyword id="KW-0560">Oxidoreductase</keyword>
<dbReference type="EC" id="1.2.1.12" evidence="2"/>
<dbReference type="EMBL" id="AE002160">
    <property type="protein sequence ID" value="AAF39595.1"/>
    <property type="molecule type" value="Genomic_DNA"/>
</dbReference>
<dbReference type="PIR" id="H81662">
    <property type="entry name" value="H81662"/>
</dbReference>
<dbReference type="RefSeq" id="WP_010231568.1">
    <property type="nucleotide sequence ID" value="NZ_CP063055.1"/>
</dbReference>
<dbReference type="SMR" id="Q9PJN6"/>
<dbReference type="GeneID" id="1246159"/>
<dbReference type="KEGG" id="cmu:TC_0792"/>
<dbReference type="eggNOG" id="COG0057">
    <property type="taxonomic scope" value="Bacteria"/>
</dbReference>
<dbReference type="HOGENOM" id="CLU_030140_0_3_0"/>
<dbReference type="OrthoDB" id="9803304at2"/>
<dbReference type="UniPathway" id="UPA00109">
    <property type="reaction ID" value="UER00184"/>
</dbReference>
<dbReference type="Proteomes" id="UP000000800">
    <property type="component" value="Chromosome"/>
</dbReference>
<dbReference type="GO" id="GO:0005737">
    <property type="term" value="C:cytoplasm"/>
    <property type="evidence" value="ECO:0007669"/>
    <property type="project" value="UniProtKB-SubCell"/>
</dbReference>
<dbReference type="GO" id="GO:0004365">
    <property type="term" value="F:glyceraldehyde-3-phosphate dehydrogenase (NAD+) (phosphorylating) activity"/>
    <property type="evidence" value="ECO:0000250"/>
    <property type="project" value="UniProtKB"/>
</dbReference>
<dbReference type="GO" id="GO:0051287">
    <property type="term" value="F:NAD binding"/>
    <property type="evidence" value="ECO:0000250"/>
    <property type="project" value="UniProtKB"/>
</dbReference>
<dbReference type="GO" id="GO:0050661">
    <property type="term" value="F:NADP binding"/>
    <property type="evidence" value="ECO:0007669"/>
    <property type="project" value="InterPro"/>
</dbReference>
<dbReference type="GO" id="GO:0006006">
    <property type="term" value="P:glucose metabolic process"/>
    <property type="evidence" value="ECO:0007669"/>
    <property type="project" value="InterPro"/>
</dbReference>
<dbReference type="GO" id="GO:0006096">
    <property type="term" value="P:glycolytic process"/>
    <property type="evidence" value="ECO:0007669"/>
    <property type="project" value="UniProtKB-UniPathway"/>
</dbReference>
<dbReference type="CDD" id="cd18126">
    <property type="entry name" value="GAPDH_I_C"/>
    <property type="match status" value="1"/>
</dbReference>
<dbReference type="CDD" id="cd05214">
    <property type="entry name" value="GAPDH_I_N"/>
    <property type="match status" value="1"/>
</dbReference>
<dbReference type="FunFam" id="3.30.360.10:FF:000001">
    <property type="entry name" value="Glyceraldehyde-3-phosphate dehydrogenase"/>
    <property type="match status" value="1"/>
</dbReference>
<dbReference type="FunFam" id="3.40.50.720:FF:000001">
    <property type="entry name" value="Glyceraldehyde-3-phosphate dehydrogenase"/>
    <property type="match status" value="1"/>
</dbReference>
<dbReference type="Gene3D" id="3.30.360.10">
    <property type="entry name" value="Dihydrodipicolinate Reductase, domain 2"/>
    <property type="match status" value="1"/>
</dbReference>
<dbReference type="Gene3D" id="3.40.50.720">
    <property type="entry name" value="NAD(P)-binding Rossmann-like Domain"/>
    <property type="match status" value="1"/>
</dbReference>
<dbReference type="InterPro" id="IPR020831">
    <property type="entry name" value="GlycerAld/Erythrose_P_DH"/>
</dbReference>
<dbReference type="InterPro" id="IPR020830">
    <property type="entry name" value="GlycerAld_3-P_DH_AS"/>
</dbReference>
<dbReference type="InterPro" id="IPR020829">
    <property type="entry name" value="GlycerAld_3-P_DH_cat"/>
</dbReference>
<dbReference type="InterPro" id="IPR020828">
    <property type="entry name" value="GlycerAld_3-P_DH_NAD(P)-bd"/>
</dbReference>
<dbReference type="InterPro" id="IPR006424">
    <property type="entry name" value="Glyceraldehyde-3-P_DH_1"/>
</dbReference>
<dbReference type="InterPro" id="IPR036291">
    <property type="entry name" value="NAD(P)-bd_dom_sf"/>
</dbReference>
<dbReference type="NCBIfam" id="TIGR01534">
    <property type="entry name" value="GAPDH-I"/>
    <property type="match status" value="1"/>
</dbReference>
<dbReference type="PANTHER" id="PTHR10836">
    <property type="entry name" value="GLYCERALDEHYDE 3-PHOSPHATE DEHYDROGENASE"/>
    <property type="match status" value="1"/>
</dbReference>
<dbReference type="PANTHER" id="PTHR10836:SF76">
    <property type="entry name" value="GLYCERALDEHYDE-3-PHOSPHATE DEHYDROGENASE-RELATED"/>
    <property type="match status" value="1"/>
</dbReference>
<dbReference type="Pfam" id="PF02800">
    <property type="entry name" value="Gp_dh_C"/>
    <property type="match status" value="1"/>
</dbReference>
<dbReference type="Pfam" id="PF00044">
    <property type="entry name" value="Gp_dh_N"/>
    <property type="match status" value="1"/>
</dbReference>
<dbReference type="PIRSF" id="PIRSF000149">
    <property type="entry name" value="GAP_DH"/>
    <property type="match status" value="1"/>
</dbReference>
<dbReference type="PRINTS" id="PR00078">
    <property type="entry name" value="G3PDHDRGNASE"/>
</dbReference>
<dbReference type="SMART" id="SM00846">
    <property type="entry name" value="Gp_dh_N"/>
    <property type="match status" value="1"/>
</dbReference>
<dbReference type="SUPFAM" id="SSF55347">
    <property type="entry name" value="Glyceraldehyde-3-phosphate dehydrogenase-like, C-terminal domain"/>
    <property type="match status" value="1"/>
</dbReference>
<dbReference type="SUPFAM" id="SSF51735">
    <property type="entry name" value="NAD(P)-binding Rossmann-fold domains"/>
    <property type="match status" value="1"/>
</dbReference>
<dbReference type="PROSITE" id="PS00071">
    <property type="entry name" value="GAPDH"/>
    <property type="match status" value="1"/>
</dbReference>
<evidence type="ECO:0000250" key="1">
    <source>
        <dbReference type="UniProtKB" id="P00362"/>
    </source>
</evidence>
<evidence type="ECO:0000250" key="2">
    <source>
        <dbReference type="UniProtKB" id="P09124"/>
    </source>
</evidence>
<evidence type="ECO:0000305" key="3"/>
<proteinExistence type="inferred from homology"/>
<accession>Q9PJN6</accession>